<reference key="1">
    <citation type="journal article" date="2005" name="BMC Biol.">
        <title>The sequence of rice chromosomes 11 and 12, rich in disease resistance genes and recent gene duplications.</title>
        <authorList>
            <consortium name="The rice chromosomes 11 and 12 sequencing consortia"/>
        </authorList>
    </citation>
    <scope>NUCLEOTIDE SEQUENCE [LARGE SCALE GENOMIC DNA]</scope>
    <source>
        <strain>cv. Nipponbare</strain>
    </source>
</reference>
<reference key="2">
    <citation type="journal article" date="2005" name="Nature">
        <title>The map-based sequence of the rice genome.</title>
        <authorList>
            <consortium name="International rice genome sequencing project (IRGSP)"/>
        </authorList>
    </citation>
    <scope>NUCLEOTIDE SEQUENCE [LARGE SCALE GENOMIC DNA]</scope>
    <source>
        <strain>cv. Nipponbare</strain>
    </source>
</reference>
<reference key="3">
    <citation type="journal article" date="2008" name="Nucleic Acids Res.">
        <title>The rice annotation project database (RAP-DB): 2008 update.</title>
        <authorList>
            <consortium name="The rice annotation project (RAP)"/>
        </authorList>
    </citation>
    <scope>GENOME REANNOTATION</scope>
    <source>
        <strain>cv. Nipponbare</strain>
    </source>
</reference>
<reference key="4">
    <citation type="journal article" date="2013" name="Rice">
        <title>Improvement of the Oryza sativa Nipponbare reference genome using next generation sequence and optical map data.</title>
        <authorList>
            <person name="Kawahara Y."/>
            <person name="de la Bastide M."/>
            <person name="Hamilton J.P."/>
            <person name="Kanamori H."/>
            <person name="McCombie W.R."/>
            <person name="Ouyang S."/>
            <person name="Schwartz D.C."/>
            <person name="Tanaka T."/>
            <person name="Wu J."/>
            <person name="Zhou S."/>
            <person name="Childs K.L."/>
            <person name="Davidson R.M."/>
            <person name="Lin H."/>
            <person name="Quesada-Ocampo L."/>
            <person name="Vaillancourt B."/>
            <person name="Sakai H."/>
            <person name="Lee S.S."/>
            <person name="Kim J."/>
            <person name="Numa H."/>
            <person name="Itoh T."/>
            <person name="Buell C.R."/>
            <person name="Matsumoto T."/>
        </authorList>
    </citation>
    <scope>GENOME REANNOTATION</scope>
    <source>
        <strain>cv. Nipponbare</strain>
    </source>
</reference>
<reference key="5">
    <citation type="journal article" date="2005" name="PLoS Biol.">
        <title>The genomes of Oryza sativa: a history of duplications.</title>
        <authorList>
            <person name="Yu J."/>
            <person name="Wang J."/>
            <person name="Lin W."/>
            <person name="Li S."/>
            <person name="Li H."/>
            <person name="Zhou J."/>
            <person name="Ni P."/>
            <person name="Dong W."/>
            <person name="Hu S."/>
            <person name="Zeng C."/>
            <person name="Zhang J."/>
            <person name="Zhang Y."/>
            <person name="Li R."/>
            <person name="Xu Z."/>
            <person name="Li S."/>
            <person name="Li X."/>
            <person name="Zheng H."/>
            <person name="Cong L."/>
            <person name="Lin L."/>
            <person name="Yin J."/>
            <person name="Geng J."/>
            <person name="Li G."/>
            <person name="Shi J."/>
            <person name="Liu J."/>
            <person name="Lv H."/>
            <person name="Li J."/>
            <person name="Wang J."/>
            <person name="Deng Y."/>
            <person name="Ran L."/>
            <person name="Shi X."/>
            <person name="Wang X."/>
            <person name="Wu Q."/>
            <person name="Li C."/>
            <person name="Ren X."/>
            <person name="Wang J."/>
            <person name="Wang X."/>
            <person name="Li D."/>
            <person name="Liu D."/>
            <person name="Zhang X."/>
            <person name="Ji Z."/>
            <person name="Zhao W."/>
            <person name="Sun Y."/>
            <person name="Zhang Z."/>
            <person name="Bao J."/>
            <person name="Han Y."/>
            <person name="Dong L."/>
            <person name="Ji J."/>
            <person name="Chen P."/>
            <person name="Wu S."/>
            <person name="Liu J."/>
            <person name="Xiao Y."/>
            <person name="Bu D."/>
            <person name="Tan J."/>
            <person name="Yang L."/>
            <person name="Ye C."/>
            <person name="Zhang J."/>
            <person name="Xu J."/>
            <person name="Zhou Y."/>
            <person name="Yu Y."/>
            <person name="Zhang B."/>
            <person name="Zhuang S."/>
            <person name="Wei H."/>
            <person name="Liu B."/>
            <person name="Lei M."/>
            <person name="Yu H."/>
            <person name="Li Y."/>
            <person name="Xu H."/>
            <person name="Wei S."/>
            <person name="He X."/>
            <person name="Fang L."/>
            <person name="Zhang Z."/>
            <person name="Zhang Y."/>
            <person name="Huang X."/>
            <person name="Su Z."/>
            <person name="Tong W."/>
            <person name="Li J."/>
            <person name="Tong Z."/>
            <person name="Li S."/>
            <person name="Ye J."/>
            <person name="Wang L."/>
            <person name="Fang L."/>
            <person name="Lei T."/>
            <person name="Chen C.-S."/>
            <person name="Chen H.-C."/>
            <person name="Xu Z."/>
            <person name="Li H."/>
            <person name="Huang H."/>
            <person name="Zhang F."/>
            <person name="Xu H."/>
            <person name="Li N."/>
            <person name="Zhao C."/>
            <person name="Li S."/>
            <person name="Dong L."/>
            <person name="Huang Y."/>
            <person name="Li L."/>
            <person name="Xi Y."/>
            <person name="Qi Q."/>
            <person name="Li W."/>
            <person name="Zhang B."/>
            <person name="Hu W."/>
            <person name="Zhang Y."/>
            <person name="Tian X."/>
            <person name="Jiao Y."/>
            <person name="Liang X."/>
            <person name="Jin J."/>
            <person name="Gao L."/>
            <person name="Zheng W."/>
            <person name="Hao B."/>
            <person name="Liu S.-M."/>
            <person name="Wang W."/>
            <person name="Yuan L."/>
            <person name="Cao M."/>
            <person name="McDermott J."/>
            <person name="Samudrala R."/>
            <person name="Wang J."/>
            <person name="Wong G.K.-S."/>
            <person name="Yang H."/>
        </authorList>
    </citation>
    <scope>NUCLEOTIDE SEQUENCE [LARGE SCALE GENOMIC DNA]</scope>
    <source>
        <strain>cv. Nipponbare</strain>
    </source>
</reference>
<reference key="6">
    <citation type="journal article" date="2003" name="Science">
        <title>Collection, mapping, and annotation of over 28,000 cDNA clones from japonica rice.</title>
        <authorList>
            <consortium name="The rice full-length cDNA consortium"/>
        </authorList>
    </citation>
    <scope>NUCLEOTIDE SEQUENCE [LARGE SCALE MRNA] OF 425-1004</scope>
    <source>
        <strain>cv. Nipponbare</strain>
    </source>
</reference>
<reference key="7">
    <citation type="journal article" date="2009" name="Ann. Bot.">
        <title>Evaluating the microtubule cytoskeleton and its interacting proteins in monocots by mining the rice genome.</title>
        <authorList>
            <person name="Guo L."/>
            <person name="Ho C.M."/>
            <person name="Kong Z."/>
            <person name="Lee Y.R."/>
            <person name="Qian Q."/>
            <person name="Liu B."/>
        </authorList>
    </citation>
    <scope>GENE FAMILY</scope>
    <scope>NOMENCLATURE</scope>
</reference>
<protein>
    <recommendedName>
        <fullName evidence="5">Kinesin-like protein KIN-14R</fullName>
    </recommendedName>
</protein>
<dbReference type="EMBL" id="DP000011">
    <property type="protein sequence ID" value="ABA99856.1"/>
    <property type="molecule type" value="Genomic_DNA"/>
</dbReference>
<dbReference type="EMBL" id="AP008218">
    <property type="protein sequence ID" value="BAF30298.1"/>
    <property type="status" value="ALT_SEQ"/>
    <property type="molecule type" value="Genomic_DNA"/>
</dbReference>
<dbReference type="EMBL" id="AP014968">
    <property type="protein sequence ID" value="BAT18097.1"/>
    <property type="status" value="ALT_SEQ"/>
    <property type="molecule type" value="Genomic_DNA"/>
</dbReference>
<dbReference type="EMBL" id="CM000149">
    <property type="protein sequence ID" value="EEE53616.1"/>
    <property type="status" value="ALT_SEQ"/>
    <property type="molecule type" value="Genomic_DNA"/>
</dbReference>
<dbReference type="EMBL" id="AK106725">
    <property type="status" value="NOT_ANNOTATED_CDS"/>
    <property type="molecule type" value="mRNA"/>
</dbReference>
<dbReference type="SMR" id="Q2QM62"/>
<dbReference type="FunCoup" id="Q2QM62">
    <property type="interactions" value="143"/>
</dbReference>
<dbReference type="STRING" id="39947.Q2QM62"/>
<dbReference type="PaxDb" id="39947-Q2QM62"/>
<dbReference type="KEGG" id="dosa:Os12g0616000"/>
<dbReference type="eggNOG" id="KOG0239">
    <property type="taxonomic scope" value="Eukaryota"/>
</dbReference>
<dbReference type="InParanoid" id="Q2QM62"/>
<dbReference type="Proteomes" id="UP000000763">
    <property type="component" value="Chromosome 12"/>
</dbReference>
<dbReference type="Proteomes" id="UP000007752">
    <property type="component" value="Chromosome 12"/>
</dbReference>
<dbReference type="Proteomes" id="UP000059680">
    <property type="component" value="Chromosome 12"/>
</dbReference>
<dbReference type="GO" id="GO:0005874">
    <property type="term" value="C:microtubule"/>
    <property type="evidence" value="ECO:0007669"/>
    <property type="project" value="UniProtKB-KW"/>
</dbReference>
<dbReference type="GO" id="GO:0015630">
    <property type="term" value="C:microtubule cytoskeleton"/>
    <property type="evidence" value="ECO:0000318"/>
    <property type="project" value="GO_Central"/>
</dbReference>
<dbReference type="GO" id="GO:0005524">
    <property type="term" value="F:ATP binding"/>
    <property type="evidence" value="ECO:0007669"/>
    <property type="project" value="UniProtKB-KW"/>
</dbReference>
<dbReference type="GO" id="GO:0008017">
    <property type="term" value="F:microtubule binding"/>
    <property type="evidence" value="ECO:0000318"/>
    <property type="project" value="GO_Central"/>
</dbReference>
<dbReference type="GO" id="GO:0003777">
    <property type="term" value="F:microtubule motor activity"/>
    <property type="evidence" value="ECO:0007669"/>
    <property type="project" value="InterPro"/>
</dbReference>
<dbReference type="GO" id="GO:0007018">
    <property type="term" value="P:microtubule-based movement"/>
    <property type="evidence" value="ECO:0007669"/>
    <property type="project" value="InterPro"/>
</dbReference>
<dbReference type="GO" id="GO:0007017">
    <property type="term" value="P:microtubule-based process"/>
    <property type="evidence" value="ECO:0000318"/>
    <property type="project" value="GO_Central"/>
</dbReference>
<dbReference type="CDD" id="cd01366">
    <property type="entry name" value="KISc_C_terminal"/>
    <property type="match status" value="1"/>
</dbReference>
<dbReference type="FunFam" id="3.40.850.10:FF:000057">
    <property type="entry name" value="kinesin-like protein KIN-14R"/>
    <property type="match status" value="1"/>
</dbReference>
<dbReference type="Gene3D" id="3.40.850.10">
    <property type="entry name" value="Kinesin motor domain"/>
    <property type="match status" value="1"/>
</dbReference>
<dbReference type="InterPro" id="IPR027640">
    <property type="entry name" value="Kinesin-like_fam"/>
</dbReference>
<dbReference type="InterPro" id="IPR019821">
    <property type="entry name" value="Kinesin_motor_CS"/>
</dbReference>
<dbReference type="InterPro" id="IPR001752">
    <property type="entry name" value="Kinesin_motor_dom"/>
</dbReference>
<dbReference type="InterPro" id="IPR036961">
    <property type="entry name" value="Kinesin_motor_dom_sf"/>
</dbReference>
<dbReference type="InterPro" id="IPR027417">
    <property type="entry name" value="P-loop_NTPase"/>
</dbReference>
<dbReference type="PANTHER" id="PTHR47972:SF35">
    <property type="entry name" value="KINESIN-LIKE PROTEIN KIN-14Q"/>
    <property type="match status" value="1"/>
</dbReference>
<dbReference type="PANTHER" id="PTHR47972">
    <property type="entry name" value="KINESIN-LIKE PROTEIN KLP-3"/>
    <property type="match status" value="1"/>
</dbReference>
<dbReference type="Pfam" id="PF00225">
    <property type="entry name" value="Kinesin"/>
    <property type="match status" value="1"/>
</dbReference>
<dbReference type="PRINTS" id="PR00380">
    <property type="entry name" value="KINESINHEAVY"/>
</dbReference>
<dbReference type="SMART" id="SM00129">
    <property type="entry name" value="KISc"/>
    <property type="match status" value="1"/>
</dbReference>
<dbReference type="SUPFAM" id="SSF52540">
    <property type="entry name" value="P-loop containing nucleoside triphosphate hydrolases"/>
    <property type="match status" value="1"/>
</dbReference>
<dbReference type="PROSITE" id="PS00411">
    <property type="entry name" value="KINESIN_MOTOR_1"/>
    <property type="match status" value="1"/>
</dbReference>
<dbReference type="PROSITE" id="PS50067">
    <property type="entry name" value="KINESIN_MOTOR_2"/>
    <property type="match status" value="1"/>
</dbReference>
<evidence type="ECO:0000255" key="1"/>
<evidence type="ECO:0000255" key="2">
    <source>
        <dbReference type="PROSITE-ProRule" id="PRU00283"/>
    </source>
</evidence>
<evidence type="ECO:0000256" key="3">
    <source>
        <dbReference type="SAM" id="MobiDB-lite"/>
    </source>
</evidence>
<evidence type="ECO:0000303" key="4">
    <source>
    </source>
</evidence>
<evidence type="ECO:0000305" key="5"/>
<evidence type="ECO:0000312" key="6">
    <source>
        <dbReference type="EMBL" id="ABA99856.1"/>
    </source>
</evidence>
<evidence type="ECO:0000312" key="7">
    <source>
        <dbReference type="EMBL" id="BAT18097.1"/>
    </source>
</evidence>
<evidence type="ECO:0000312" key="8">
    <source>
        <dbReference type="EMBL" id="EEE53616.1"/>
    </source>
</evidence>
<organism>
    <name type="scientific">Oryza sativa subsp. japonica</name>
    <name type="common">Rice</name>
    <dbReference type="NCBI Taxonomy" id="39947"/>
    <lineage>
        <taxon>Eukaryota</taxon>
        <taxon>Viridiplantae</taxon>
        <taxon>Streptophyta</taxon>
        <taxon>Embryophyta</taxon>
        <taxon>Tracheophyta</taxon>
        <taxon>Spermatophyta</taxon>
        <taxon>Magnoliopsida</taxon>
        <taxon>Liliopsida</taxon>
        <taxon>Poales</taxon>
        <taxon>Poaceae</taxon>
        <taxon>BOP clade</taxon>
        <taxon>Oryzoideae</taxon>
        <taxon>Oryzeae</taxon>
        <taxon>Oryzinae</taxon>
        <taxon>Oryza</taxon>
        <taxon>Oryza sativa</taxon>
    </lineage>
</organism>
<name>KN14R_ORYSJ</name>
<feature type="chain" id="PRO_0000438643" description="Kinesin-like protein KIN-14R">
    <location>
        <begin position="1"/>
        <end position="1004"/>
    </location>
</feature>
<feature type="domain" description="Kinesin motor" evidence="2">
    <location>
        <begin position="345"/>
        <end position="671"/>
    </location>
</feature>
<feature type="region of interest" description="Disordered" evidence="3">
    <location>
        <begin position="1"/>
        <end position="21"/>
    </location>
</feature>
<feature type="region of interest" description="Disordered" evidence="3">
    <location>
        <begin position="61"/>
        <end position="90"/>
    </location>
</feature>
<feature type="region of interest" description="Disordered" evidence="3">
    <location>
        <begin position="110"/>
        <end position="169"/>
    </location>
</feature>
<feature type="region of interest" description="Disordered" evidence="3">
    <location>
        <begin position="759"/>
        <end position="791"/>
    </location>
</feature>
<feature type="region of interest" description="Disordered" evidence="3">
    <location>
        <begin position="946"/>
        <end position="1004"/>
    </location>
</feature>
<feature type="coiled-coil region" evidence="1">
    <location>
        <begin position="189"/>
        <end position="230"/>
    </location>
</feature>
<feature type="coiled-coil region" evidence="1">
    <location>
        <begin position="266"/>
        <end position="338"/>
    </location>
</feature>
<feature type="coiled-coil region" evidence="1">
    <location>
        <begin position="691"/>
        <end position="742"/>
    </location>
</feature>
<feature type="compositionally biased region" description="Acidic residues" evidence="3">
    <location>
        <begin position="63"/>
        <end position="75"/>
    </location>
</feature>
<feature type="compositionally biased region" description="Pro residues" evidence="3">
    <location>
        <begin position="115"/>
        <end position="125"/>
    </location>
</feature>
<feature type="compositionally biased region" description="Low complexity" evidence="3">
    <location>
        <begin position="948"/>
        <end position="958"/>
    </location>
</feature>
<feature type="compositionally biased region" description="Polar residues" evidence="3">
    <location>
        <begin position="995"/>
        <end position="1004"/>
    </location>
</feature>
<feature type="binding site" evidence="2">
    <location>
        <begin position="428"/>
        <end position="435"/>
    </location>
    <ligand>
        <name>ATP</name>
        <dbReference type="ChEBI" id="CHEBI:30616"/>
    </ligand>
</feature>
<comment type="similarity">
    <text evidence="4">Belongs to the TRAFAC class myosin-kinesin ATPase superfamily. Kinesin family. KIN-14 subfamily.</text>
</comment>
<comment type="sequence caution" evidence="5">
    <conflict type="erroneous gene model prediction">
        <sequence resource="EMBL-CDS" id="BAF30298"/>
    </conflict>
</comment>
<comment type="sequence caution" evidence="5">
    <conflict type="erroneous gene model prediction">
        <sequence resource="EMBL-CDS" id="BAT18097"/>
    </conflict>
</comment>
<comment type="sequence caution" evidence="5">
    <conflict type="erroneous gene model prediction">
        <sequence resource="EMBL-CDS" id="EEE53616"/>
    </conflict>
</comment>
<keyword id="KW-0067">ATP-binding</keyword>
<keyword id="KW-0175">Coiled coil</keyword>
<keyword id="KW-0493">Microtubule</keyword>
<keyword id="KW-0505">Motor protein</keyword>
<keyword id="KW-0547">Nucleotide-binding</keyword>
<keyword id="KW-1185">Reference proteome</keyword>
<accession>Q2QM62</accession>
<accession>B9GEA9</accession>
<accession>Q0ILW7</accession>
<gene>
    <name evidence="5" type="primary">KIN14R</name>
    <name evidence="7" type="ordered locus">Os12g0616000</name>
    <name evidence="6" type="ordered locus">LOC_Os12g42160</name>
    <name evidence="8" type="ORF">OsJ_36881</name>
</gene>
<proteinExistence type="evidence at transcript level"/>
<sequence>MEEEGSGRGGDGPAAHGRIGDTASLGASCVRAGVGGDSPVMVSSASVRKTVKMSETCDFIPYVDDDDDGNSEEENSASSGILPCDGMQHDTPDYIRRGAAAARHRIAPLELFSGPSPPQGPPSPSPAIGGAALEATSNDGVAEPQVHPPEGISSIISTGGGEQETATMGSQSVHETLHIEENEGKCSCCGQLKQEYSLLLREKEECRRVLEDLMRENELKSRECHEAQASLHELRMELMRKSMHVGSLAFAVEGQVKEKSRWCQLLNDLSEKFKALKAEHQILLQESLECKKFVADATQMTTTIQQHVNQYASLECEFKDLKEKFTEETKERKDLYNKLIEVKGNIRVFCRCRPLNGEEIEEGASMAVDFESAKDGELIVRGHVSSKKVFKFDSVFSPEEDQEKVFEKTVPFATSVLDGYNVCIFAYGQTGTGKTFTMEGIEDARGVNYRTLEELFRITKERQGLFQYEITVSVLEVYNEQIHDLLLTGTQPGATAKRLEVRQVAEGVHHVPGLVEARVTNMNEAWEVLQTGSKARVVGSTNANEHSSRSHCMHCVMVKGENLMNGEQTKSKLWLIDLAGSERVAKTDAQGERLKEAQNINKSLSALGDVISALATKSQHIPFRNSKLTHLLQDSLSGDSKTLMFVQISPNENDVGETLCSLNFASRVRGIELGQARKQVDVGELSRYKLMAGRAKQDSKNKDAQIKSMEETIQSLEAKNKAKDLLTMNLQEKIKELEAQLLVERKIARQHVDNKIAQDHLHQQQQSKKPENSPCPTRSPMAERNLNSTAEKPVTLLKDLGIARQMFSDSNTDTYSINHLMSMSSEKENNPAGGAQPTKARRVSLCGGAHQQPAAPPRRGSLIPLPRRNSLMLPLPLPKPATPAAAASPLDMITEQCSSPLVIAPNDIRGGGGGGGRNKRIINSILRRSLQKKVIIRPPLMAAHQSGRRAGAGVAGTTTHGGGGGGVMRARRVPVSGGRGGGGVQHNREKERGWNNGTSLRQLN</sequence>